<keyword id="KW-1015">Disulfide bond</keyword>
<keyword id="KW-0496">Mitochondrion</keyword>
<keyword id="KW-1185">Reference proteome</keyword>
<keyword id="KW-0677">Repeat</keyword>
<reference key="1">
    <citation type="journal article" date="1997" name="Nature">
        <title>The nucleotide sequence of Saccharomyces cerevisiae chromosome XIII.</title>
        <authorList>
            <person name="Bowman S."/>
            <person name="Churcher C.M."/>
            <person name="Badcock K."/>
            <person name="Brown D."/>
            <person name="Chillingworth T."/>
            <person name="Connor R."/>
            <person name="Dedman K."/>
            <person name="Devlin K."/>
            <person name="Gentles S."/>
            <person name="Hamlin N."/>
            <person name="Hunt S."/>
            <person name="Jagels K."/>
            <person name="Lye G."/>
            <person name="Moule S."/>
            <person name="Odell C."/>
            <person name="Pearson D."/>
            <person name="Rajandream M.A."/>
            <person name="Rice P."/>
            <person name="Skelton J."/>
            <person name="Walsh S.V."/>
            <person name="Whitehead S."/>
            <person name="Barrell B.G."/>
        </authorList>
    </citation>
    <scope>NUCLEOTIDE SEQUENCE [LARGE SCALE GENOMIC DNA]</scope>
    <source>
        <strain>ATCC 204508 / S288c</strain>
    </source>
</reference>
<reference key="2">
    <citation type="journal article" date="2014" name="G3 (Bethesda)">
        <title>The reference genome sequence of Saccharomyces cerevisiae: Then and now.</title>
        <authorList>
            <person name="Engel S.R."/>
            <person name="Dietrich F.S."/>
            <person name="Fisk D.G."/>
            <person name="Binkley G."/>
            <person name="Balakrishnan R."/>
            <person name="Costanzo M.C."/>
            <person name="Dwight S.S."/>
            <person name="Hitz B.C."/>
            <person name="Karra K."/>
            <person name="Nash R.S."/>
            <person name="Weng S."/>
            <person name="Wong E.D."/>
            <person name="Lloyd P."/>
            <person name="Skrzypek M.S."/>
            <person name="Miyasato S.R."/>
            <person name="Simison M."/>
            <person name="Cherry J.M."/>
        </authorList>
    </citation>
    <scope>GENOME REANNOTATION</scope>
    <source>
        <strain>ATCC 204508 / S288c</strain>
    </source>
</reference>
<reference key="3">
    <citation type="journal article" date="2003" name="Genome Biol.">
        <title>Reinvestigation of the Saccharomyces cerevisiae genome annotation by comparison to the genome of a related fungus: Ashbya gossypii.</title>
        <authorList>
            <person name="Brachat S."/>
            <person name="Dietrich F.S."/>
            <person name="Voegeli S."/>
            <person name="Zhang Z."/>
            <person name="Stuart L."/>
            <person name="Lerch A."/>
            <person name="Gates K."/>
            <person name="Gaffney T.D."/>
            <person name="Philippsen P."/>
        </authorList>
    </citation>
    <scope>GENOME REANNOTATION</scope>
    <source>
        <strain>ATCC 204511 / S288c / AB972</strain>
    </source>
</reference>
<reference key="4">
    <citation type="journal article" date="2009" name="J. Mol. Biol.">
        <title>Systematic analysis of the twin cx(9)c protein family.</title>
        <authorList>
            <person name="Longen S."/>
            <person name="Bien M."/>
            <person name="Bihlmaier K."/>
            <person name="Kloeppel C."/>
            <person name="Kauff F."/>
            <person name="Hammermeister M."/>
            <person name="Westermann B."/>
            <person name="Herrmann J.M."/>
            <person name="Riemer J."/>
        </authorList>
    </citation>
    <scope>DOMAIN</scope>
    <scope>SUBCELLULAR LOCATION</scope>
</reference>
<reference key="5">
    <citation type="journal article" date="2010" name="Mol. Biosyst.">
        <title>Genome-wide analysis of eukaryotic twin CX9C proteins.</title>
        <authorList>
            <person name="Cavallaro G."/>
        </authorList>
    </citation>
    <scope>DOMAIN</scope>
</reference>
<reference key="6">
    <citation type="journal article" date="2012" name="Mol. Cell. Proteomics">
        <title>Intermembrane space proteome of yeast mitochondria.</title>
        <authorList>
            <person name="Voegtle F.N."/>
            <person name="Burkhart J.M."/>
            <person name="Rao S."/>
            <person name="Gerbeth C."/>
            <person name="Hinrichs J."/>
            <person name="Martinou J.C."/>
            <person name="Chacinska A."/>
            <person name="Sickmann A."/>
            <person name="Zahedi R.P."/>
            <person name="Meisinger C."/>
        </authorList>
    </citation>
    <scope>IDENTIFICATION BY MASS SPECTROMETRY</scope>
    <scope>SUBCELLULAR LOCATION [LARGE SCALE ANALYSIS]</scope>
</reference>
<protein>
    <recommendedName>
        <fullName>Cx9C motif-containing protein 4, mitochondrial</fullName>
    </recommendedName>
</protein>
<evidence type="ECO:0000250" key="1"/>
<evidence type="ECO:0000255" key="2">
    <source>
        <dbReference type="PROSITE-ProRule" id="PRU01150"/>
    </source>
</evidence>
<evidence type="ECO:0000269" key="3">
    <source>
    </source>
</evidence>
<evidence type="ECO:0000269" key="4">
    <source>
    </source>
</evidence>
<evidence type="ECO:0000305" key="5"/>
<proteinExistence type="evidence at protein level"/>
<organism>
    <name type="scientific">Saccharomyces cerevisiae (strain ATCC 204508 / S288c)</name>
    <name type="common">Baker's yeast</name>
    <dbReference type="NCBI Taxonomy" id="559292"/>
    <lineage>
        <taxon>Eukaryota</taxon>
        <taxon>Fungi</taxon>
        <taxon>Dikarya</taxon>
        <taxon>Ascomycota</taxon>
        <taxon>Saccharomycotina</taxon>
        <taxon>Saccharomycetes</taxon>
        <taxon>Saccharomycetales</taxon>
        <taxon>Saccharomycetaceae</taxon>
        <taxon>Saccharomyces</taxon>
    </lineage>
</organism>
<name>CMC4_YEAST</name>
<dbReference type="EMBL" id="Z47815">
    <property type="status" value="NOT_ANNOTATED_CDS"/>
    <property type="molecule type" value="Genomic_DNA"/>
</dbReference>
<dbReference type="EMBL" id="BK006946">
    <property type="protein sequence ID" value="DAA10093.1"/>
    <property type="molecule type" value="Genomic_DNA"/>
</dbReference>
<dbReference type="RefSeq" id="NP_878145.1">
    <property type="nucleotide sequence ID" value="NM_001184524.1"/>
</dbReference>
<dbReference type="SMR" id="Q3E7A9"/>
<dbReference type="BioGRID" id="37045">
    <property type="interactions" value="29"/>
</dbReference>
<dbReference type="FunCoup" id="Q3E7A9">
    <property type="interactions" value="151"/>
</dbReference>
<dbReference type="STRING" id="4932.YMR194C-B"/>
<dbReference type="PaxDb" id="4932-YMR194C-B"/>
<dbReference type="PeptideAtlas" id="Q3E7A9"/>
<dbReference type="EnsemblFungi" id="YMR194C-B_mRNA">
    <property type="protein sequence ID" value="YMR194C-B"/>
    <property type="gene ID" value="YMR194C-B"/>
</dbReference>
<dbReference type="GeneID" id="1466503"/>
<dbReference type="KEGG" id="sce:YMR194C-B"/>
<dbReference type="AGR" id="SGD:S000028514"/>
<dbReference type="SGD" id="S000028514">
    <property type="gene designation" value="CMC4"/>
</dbReference>
<dbReference type="VEuPathDB" id="FungiDB:YMR194C-B"/>
<dbReference type="eggNOG" id="ENOG502S7M4">
    <property type="taxonomic scope" value="Eukaryota"/>
</dbReference>
<dbReference type="GeneTree" id="ENSGT00390000012647"/>
<dbReference type="HOGENOM" id="CLU_177210_0_0_1"/>
<dbReference type="InParanoid" id="Q3E7A9"/>
<dbReference type="OMA" id="YQEEKCQ"/>
<dbReference type="OrthoDB" id="13601at2759"/>
<dbReference type="BioCyc" id="YEAST:G3O-33025-MONOMER"/>
<dbReference type="BioGRID-ORCS" id="1466503">
    <property type="hits" value="0 hits in 10 CRISPR screens"/>
</dbReference>
<dbReference type="ChiTaRS" id="CMC4">
    <property type="organism name" value="yeast"/>
</dbReference>
<dbReference type="PRO" id="PR:Q3E7A9"/>
<dbReference type="Proteomes" id="UP000002311">
    <property type="component" value="Chromosome XIII"/>
</dbReference>
<dbReference type="RNAct" id="Q3E7A9">
    <property type="molecule type" value="protein"/>
</dbReference>
<dbReference type="GO" id="GO:0005758">
    <property type="term" value="C:mitochondrial intermembrane space"/>
    <property type="evidence" value="ECO:0000314"/>
    <property type="project" value="SGD"/>
</dbReference>
<dbReference type="FunFam" id="1.10.287.1130:FF:000008">
    <property type="entry name" value="Cx9C motif-containing protein 4, mitochondrial"/>
    <property type="match status" value="1"/>
</dbReference>
<dbReference type="Gene3D" id="1.10.287.1130">
    <property type="entry name" value="CytochromE C oxidase copper chaperone"/>
    <property type="match status" value="1"/>
</dbReference>
<dbReference type="InterPro" id="IPR027179">
    <property type="entry name" value="CMC4"/>
</dbReference>
<dbReference type="InterPro" id="IPR009069">
    <property type="entry name" value="Cys_alpha_HP_mot_SF"/>
</dbReference>
<dbReference type="PANTHER" id="PTHR15590">
    <property type="entry name" value="CX9C MOTIF-CONTAINING PROTEIN 4"/>
    <property type="match status" value="1"/>
</dbReference>
<dbReference type="PANTHER" id="PTHR15590:SF0">
    <property type="entry name" value="CX9C MOTIF-CONTAINING PROTEIN 4"/>
    <property type="match status" value="1"/>
</dbReference>
<dbReference type="Pfam" id="PF08991">
    <property type="entry name" value="CMC4"/>
    <property type="match status" value="1"/>
</dbReference>
<dbReference type="SUPFAM" id="SSF47072">
    <property type="entry name" value="Cysteine alpha-hairpin motif"/>
    <property type="match status" value="1"/>
</dbReference>
<dbReference type="PROSITE" id="PS51808">
    <property type="entry name" value="CHCH"/>
    <property type="match status" value="1"/>
</dbReference>
<comment type="subcellular location">
    <subcellularLocation>
        <location evidence="3 4">Mitochondrion intermembrane space</location>
    </subcellularLocation>
    <text>Imported into the mitochondria via the mitochondrial MIA40-ERV1 machinery.</text>
</comment>
<comment type="domain">
    <text evidence="1">The twin Cx9C motifs are involved in the recognition by the mitochondrial MIA40-ERV1 disulfide relay system and the subsequent transfer of disulfide bonds by dithiol/disulfide exchange reactions to the newly imported protein.</text>
</comment>
<comment type="similarity">
    <text evidence="5">Belongs to the CMC4 family.</text>
</comment>
<feature type="chain" id="PRO_0000247790" description="Cx9C motif-containing protein 4, mitochondrial">
    <location>
        <begin position="1"/>
        <end position="73"/>
    </location>
</feature>
<feature type="domain" description="CHCH" evidence="2">
    <location>
        <begin position="2"/>
        <end position="44"/>
    </location>
</feature>
<feature type="short sequence motif" description="Cx9C motif 1" evidence="2">
    <location>
        <begin position="5"/>
        <end position="15"/>
    </location>
</feature>
<feature type="short sequence motif" description="Cx9C motif 2" evidence="2">
    <location>
        <begin position="26"/>
        <end position="36"/>
    </location>
</feature>
<feature type="disulfide bond" evidence="2">
    <location>
        <begin position="5"/>
        <end position="36"/>
    </location>
</feature>
<feature type="disulfide bond" evidence="2">
    <location>
        <begin position="15"/>
        <end position="26"/>
    </location>
</feature>
<sequence length="73" mass="8202">MSNPCQKEACAIQDCLLSHQYDDAKCAKVIDQLYICCSKFYNDNGKDSRSPCCPLPSLLELKMKQRKLTPGDS</sequence>
<accession>Q3E7A9</accession>
<accession>D6W019</accession>
<gene>
    <name type="primary">CMC4</name>
    <name type="ordered locus">YMR194C-B</name>
</gene>